<evidence type="ECO:0000255" key="1"/>
<evidence type="ECO:0000269" key="2">
    <source>
    </source>
</evidence>
<evidence type="ECO:0000305" key="3"/>
<proteinExistence type="evidence at protein level"/>
<protein>
    <recommendedName>
        <fullName evidence="3">Outer kinetochore KNL1 complex subunit sos7</fullName>
    </recommendedName>
    <alternativeName>
        <fullName>Kinetochore protein Sos7</fullName>
    </alternativeName>
    <alternativeName>
        <fullName>Suppressor of spc7 protein</fullName>
    </alternativeName>
</protein>
<sequence>MDQNKSTQATGNGKKTEEINELLESFIKEGPKLLWGSTNLKYEDQISRSSEHELQQYRELFTRLKFSYIEQGTKERYLRAILDDPPMLVEAEDNEKLETTNSSLKGRLKSEKREVDLLTEELKTTSRELSSNYESVMEECKNTKSTLSKLESLESELLKLQQDSSTKTPILPEVEAAIHDLESELNITNESIETIDGKIDNDEKYFIQLTKNLSLLEKEYKIASERSNQIKAAIHTRTPDADAKKQVQNWYTSMLEIYDQLLQK</sequence>
<dbReference type="EMBL" id="CU329670">
    <property type="protein sequence ID" value="CAO77638.2"/>
    <property type="molecule type" value="Genomic_DNA"/>
</dbReference>
<dbReference type="RefSeq" id="XP_004001765.1">
    <property type="nucleotide sequence ID" value="XM_004001716.1"/>
</dbReference>
<dbReference type="SMR" id="U3H042"/>
<dbReference type="BioGRID" id="280478">
    <property type="interactions" value="4"/>
</dbReference>
<dbReference type="STRING" id="284812.U3H042"/>
<dbReference type="PaxDb" id="4896-SPAPB17E12.06.1"/>
<dbReference type="EnsemblFungi" id="SPAPB17E12.06.1">
    <property type="protein sequence ID" value="SPAPB17E12.06.1:pep"/>
    <property type="gene ID" value="SPAPB17E12.06"/>
</dbReference>
<dbReference type="PomBase" id="SPAPB17E12.06">
    <property type="gene designation" value="sos7"/>
</dbReference>
<dbReference type="VEuPathDB" id="FungiDB:SPAPB17E12.06"/>
<dbReference type="eggNOG" id="ENOG502S6XI">
    <property type="taxonomic scope" value="Eukaryota"/>
</dbReference>
<dbReference type="HOGENOM" id="CLU_1090528_0_0_1"/>
<dbReference type="InParanoid" id="U3H042"/>
<dbReference type="OMA" id="YIEQGTK"/>
<dbReference type="PRO" id="PR:U3H042"/>
<dbReference type="Proteomes" id="UP000002485">
    <property type="component" value="Chromosome I"/>
</dbReference>
<dbReference type="GO" id="GO:0000776">
    <property type="term" value="C:kinetochore"/>
    <property type="evidence" value="ECO:0000314"/>
    <property type="project" value="PomBase"/>
</dbReference>
<dbReference type="GO" id="GO:0180019">
    <property type="term" value="C:Knl1/Spc105 complex"/>
    <property type="evidence" value="ECO:0000250"/>
    <property type="project" value="UniProtKB"/>
</dbReference>
<dbReference type="GO" id="GO:0005634">
    <property type="term" value="C:nucleus"/>
    <property type="evidence" value="ECO:0000305"/>
    <property type="project" value="PomBase"/>
</dbReference>
<dbReference type="GO" id="GO:0051315">
    <property type="term" value="P:attachment of mitotic spindle microtubules to kinetochore"/>
    <property type="evidence" value="ECO:0000315"/>
    <property type="project" value="PomBase"/>
</dbReference>
<dbReference type="GO" id="GO:0051301">
    <property type="term" value="P:cell division"/>
    <property type="evidence" value="ECO:0007669"/>
    <property type="project" value="UniProtKB-KW"/>
</dbReference>
<dbReference type="GO" id="GO:0031619">
    <property type="term" value="P:homologous chromosome orientation in meiotic metaphase I"/>
    <property type="evidence" value="ECO:0000250"/>
    <property type="project" value="UniProtKB"/>
</dbReference>
<dbReference type="GO" id="GO:0000070">
    <property type="term" value="P:mitotic sister chromatid segregation"/>
    <property type="evidence" value="ECO:0000315"/>
    <property type="project" value="PomBase"/>
</dbReference>
<dbReference type="GO" id="GO:0034501">
    <property type="term" value="P:protein localization to kinetochore"/>
    <property type="evidence" value="ECO:0007669"/>
    <property type="project" value="InterPro"/>
</dbReference>
<dbReference type="GO" id="GO:1905325">
    <property type="term" value="P:regulation of meiosis I spindle assembly checkpoint"/>
    <property type="evidence" value="ECO:0000250"/>
    <property type="project" value="UniProtKB"/>
</dbReference>
<dbReference type="GO" id="GO:0051455">
    <property type="term" value="P:spindle attachment to meiosis I kinetochore"/>
    <property type="evidence" value="ECO:0000305"/>
    <property type="project" value="PomBase"/>
</dbReference>
<dbReference type="InterPro" id="IPR037475">
    <property type="entry name" value="Sos7"/>
</dbReference>
<dbReference type="InterPro" id="IPR048781">
    <property type="entry name" value="Sos7_CC"/>
</dbReference>
<dbReference type="PANTHER" id="PTHR37329">
    <property type="entry name" value="KINETOCHORE PROTEIN SOS7"/>
    <property type="match status" value="1"/>
</dbReference>
<dbReference type="PANTHER" id="PTHR37329:SF1">
    <property type="entry name" value="KINETOCHORE PROTEIN SOS7"/>
    <property type="match status" value="1"/>
</dbReference>
<dbReference type="Pfam" id="PF20882">
    <property type="entry name" value="Sos7"/>
    <property type="match status" value="1"/>
</dbReference>
<name>ZWINT_SCHPO</name>
<comment type="function">
    <text evidence="2">Acts as a component of the outer kinetochore KNL1 complex that facilitates microtubule-kinetochore interactions and the spindle assembly checkpoint (PubMed:22711988). Kinetochores, consisting of a centromere-associated inner segment and a microtubule-contacting outer segment, play a crucial role in chromosome segregation by mediating the physical connection between centromeric DNA and spindle microtubules (PubMed:22711988). The outer kinetochore is made up of the ten-subunit KMN network, comprising the MIS12, NDC80 and KNL1 complexes, and auxiliary microtubule-associated components; together they connect the outer kinetochore with the inner kinetochore, bind microtubules, and mediate interactions with mitotic checkpoint proteins that delay anaphase until chromosomes are bioriented on the spindle (PubMed:22711988).</text>
</comment>
<comment type="subunit">
    <text evidence="2">Component of the KNL1/SPC105 complex composed of at least spc7 and sos7 (PubMed:22711988). Part of the outer kinetochore KMN network that includes the KNL1, MIS12 and NDC80 complexes (PubMed:22711988). Interacts (via C-terminus) with spc7 (via C-terminus); the interaction is direct (PubMed:22711988).</text>
</comment>
<comment type="subcellular location">
    <subcellularLocation>
        <location evidence="2">Nucleus</location>
    </subcellularLocation>
    <subcellularLocation>
        <location evidence="2">Chromosome</location>
        <location evidence="2">Centromere</location>
        <location evidence="2">Kinetochore</location>
    </subcellularLocation>
</comment>
<comment type="similarity">
    <text evidence="3">Belongs to the KRE28 family.</text>
</comment>
<gene>
    <name type="primary">sos7</name>
    <name type="ORF">SPAPB17E12.06</name>
</gene>
<accession>U3H042</accession>
<reference key="1">
    <citation type="journal article" date="2002" name="Nature">
        <title>The genome sequence of Schizosaccharomyces pombe.</title>
        <authorList>
            <person name="Wood V."/>
            <person name="Gwilliam R."/>
            <person name="Rajandream M.A."/>
            <person name="Lyne M.H."/>
            <person name="Lyne R."/>
            <person name="Stewart A."/>
            <person name="Sgouros J.G."/>
            <person name="Peat N."/>
            <person name="Hayles J."/>
            <person name="Baker S.G."/>
            <person name="Basham D."/>
            <person name="Bowman S."/>
            <person name="Brooks K."/>
            <person name="Brown D."/>
            <person name="Brown S."/>
            <person name="Chillingworth T."/>
            <person name="Churcher C.M."/>
            <person name="Collins M."/>
            <person name="Connor R."/>
            <person name="Cronin A."/>
            <person name="Davis P."/>
            <person name="Feltwell T."/>
            <person name="Fraser A."/>
            <person name="Gentles S."/>
            <person name="Goble A."/>
            <person name="Hamlin N."/>
            <person name="Harris D.E."/>
            <person name="Hidalgo J."/>
            <person name="Hodgson G."/>
            <person name="Holroyd S."/>
            <person name="Hornsby T."/>
            <person name="Howarth S."/>
            <person name="Huckle E.J."/>
            <person name="Hunt S."/>
            <person name="Jagels K."/>
            <person name="James K.D."/>
            <person name="Jones L."/>
            <person name="Jones M."/>
            <person name="Leather S."/>
            <person name="McDonald S."/>
            <person name="McLean J."/>
            <person name="Mooney P."/>
            <person name="Moule S."/>
            <person name="Mungall K.L."/>
            <person name="Murphy L.D."/>
            <person name="Niblett D."/>
            <person name="Odell C."/>
            <person name="Oliver K."/>
            <person name="O'Neil S."/>
            <person name="Pearson D."/>
            <person name="Quail M.A."/>
            <person name="Rabbinowitsch E."/>
            <person name="Rutherford K.M."/>
            <person name="Rutter S."/>
            <person name="Saunders D."/>
            <person name="Seeger K."/>
            <person name="Sharp S."/>
            <person name="Skelton J."/>
            <person name="Simmonds M.N."/>
            <person name="Squares R."/>
            <person name="Squares S."/>
            <person name="Stevens K."/>
            <person name="Taylor K."/>
            <person name="Taylor R.G."/>
            <person name="Tivey A."/>
            <person name="Walsh S.V."/>
            <person name="Warren T."/>
            <person name="Whitehead S."/>
            <person name="Woodward J.R."/>
            <person name="Volckaert G."/>
            <person name="Aert R."/>
            <person name="Robben J."/>
            <person name="Grymonprez B."/>
            <person name="Weltjens I."/>
            <person name="Vanstreels E."/>
            <person name="Rieger M."/>
            <person name="Schaefer M."/>
            <person name="Mueller-Auer S."/>
            <person name="Gabel C."/>
            <person name="Fuchs M."/>
            <person name="Duesterhoeft A."/>
            <person name="Fritzc C."/>
            <person name="Holzer E."/>
            <person name="Moestl D."/>
            <person name="Hilbert H."/>
            <person name="Borzym K."/>
            <person name="Langer I."/>
            <person name="Beck A."/>
            <person name="Lehrach H."/>
            <person name="Reinhardt R."/>
            <person name="Pohl T.M."/>
            <person name="Eger P."/>
            <person name="Zimmermann W."/>
            <person name="Wedler H."/>
            <person name="Wambutt R."/>
            <person name="Purnelle B."/>
            <person name="Goffeau A."/>
            <person name="Cadieu E."/>
            <person name="Dreano S."/>
            <person name="Gloux S."/>
            <person name="Lelaure V."/>
            <person name="Mottier S."/>
            <person name="Galibert F."/>
            <person name="Aves S.J."/>
            <person name="Xiang Z."/>
            <person name="Hunt C."/>
            <person name="Moore K."/>
            <person name="Hurst S.M."/>
            <person name="Lucas M."/>
            <person name="Rochet M."/>
            <person name="Gaillardin C."/>
            <person name="Tallada V.A."/>
            <person name="Garzon A."/>
            <person name="Thode G."/>
            <person name="Daga R.R."/>
            <person name="Cruzado L."/>
            <person name="Jimenez J."/>
            <person name="Sanchez M."/>
            <person name="del Rey F."/>
            <person name="Benito J."/>
            <person name="Dominguez A."/>
            <person name="Revuelta J.L."/>
            <person name="Moreno S."/>
            <person name="Armstrong J."/>
            <person name="Forsburg S.L."/>
            <person name="Cerutti L."/>
            <person name="Lowe T."/>
            <person name="McCombie W.R."/>
            <person name="Paulsen I."/>
            <person name="Potashkin J."/>
            <person name="Shpakovski G.V."/>
            <person name="Ussery D."/>
            <person name="Barrell B.G."/>
            <person name="Nurse P."/>
        </authorList>
    </citation>
    <scope>NUCLEOTIDE SEQUENCE [LARGE SCALE GENOMIC DNA]</scope>
    <source>
        <strain>972 / ATCC 24843</strain>
    </source>
</reference>
<reference key="2">
    <citation type="journal article" date="2011" name="Science">
        <title>Comparative functional genomics of the fission yeasts.</title>
        <authorList>
            <person name="Rhind N."/>
            <person name="Chen Z."/>
            <person name="Yassour M."/>
            <person name="Thompson D.A."/>
            <person name="Haas B.J."/>
            <person name="Habib N."/>
            <person name="Wapinski I."/>
            <person name="Roy S."/>
            <person name="Lin M.F."/>
            <person name="Heiman D.I."/>
            <person name="Young S.K."/>
            <person name="Furuya K."/>
            <person name="Guo Y."/>
            <person name="Pidoux A."/>
            <person name="Chen H.M."/>
            <person name="Robbertse B."/>
            <person name="Goldberg J.M."/>
            <person name="Aoki K."/>
            <person name="Bayne E.H."/>
            <person name="Berlin A.M."/>
            <person name="Desjardins C.A."/>
            <person name="Dobbs E."/>
            <person name="Dukaj L."/>
            <person name="Fan L."/>
            <person name="FitzGerald M.G."/>
            <person name="French C."/>
            <person name="Gujja S."/>
            <person name="Hansen K."/>
            <person name="Keifenheim D."/>
            <person name="Levin J.Z."/>
            <person name="Mosher R.A."/>
            <person name="Mueller C.A."/>
            <person name="Pfiffner J."/>
            <person name="Priest M."/>
            <person name="Russ C."/>
            <person name="Smialowska A."/>
            <person name="Swoboda P."/>
            <person name="Sykes S.M."/>
            <person name="Vaughn M."/>
            <person name="Vengrova S."/>
            <person name="Yoder R."/>
            <person name="Zeng Q."/>
            <person name="Allshire R."/>
            <person name="Baulcombe D."/>
            <person name="Birren B.W."/>
            <person name="Brown W."/>
            <person name="Ekwall K."/>
            <person name="Kellis M."/>
            <person name="Leatherwood J."/>
            <person name="Levin H."/>
            <person name="Margalit H."/>
            <person name="Martienssen R."/>
            <person name="Nieduszynski C.A."/>
            <person name="Spatafora J.W."/>
            <person name="Friedman N."/>
            <person name="Dalgaard J.Z."/>
            <person name="Baumann P."/>
            <person name="Niki H."/>
            <person name="Regev A."/>
            <person name="Nusbaum C."/>
        </authorList>
    </citation>
    <scope>REVISION OF GENE MODEL</scope>
</reference>
<reference key="3">
    <citation type="journal article" date="2012" name="Mol. Cell. Biol.">
        <title>Sos7, an essential component of the conserved Schizosaccharomyces pombe Ndc80-MIND-Spc7 complex, identifies a new family of fungal kinetochore proteins.</title>
        <authorList>
            <person name="Jakopec V."/>
            <person name="Topolski B."/>
            <person name="Fleig U."/>
        </authorList>
    </citation>
    <scope>FUNCTION</scope>
    <scope>SUBUNIT</scope>
    <scope>INTERACTION WITH SPC7</scope>
    <scope>SUBCELLULAR LOCATION</scope>
    <scope>MUTAGENESIS OF ILE-178</scope>
</reference>
<organism>
    <name type="scientific">Schizosaccharomyces pombe (strain 972 / ATCC 24843)</name>
    <name type="common">Fission yeast</name>
    <dbReference type="NCBI Taxonomy" id="284812"/>
    <lineage>
        <taxon>Eukaryota</taxon>
        <taxon>Fungi</taxon>
        <taxon>Dikarya</taxon>
        <taxon>Ascomycota</taxon>
        <taxon>Taphrinomycotina</taxon>
        <taxon>Schizosaccharomycetes</taxon>
        <taxon>Schizosaccharomycetales</taxon>
        <taxon>Schizosaccharomycetaceae</taxon>
        <taxon>Schizosaccharomyces</taxon>
    </lineage>
</organism>
<keyword id="KW-0131">Cell cycle</keyword>
<keyword id="KW-0132">Cell division</keyword>
<keyword id="KW-0137">Centromere</keyword>
<keyword id="KW-0158">Chromosome</keyword>
<keyword id="KW-0175">Coiled coil</keyword>
<keyword id="KW-0995">Kinetochore</keyword>
<keyword id="KW-0498">Mitosis</keyword>
<keyword id="KW-0539">Nucleus</keyword>
<keyword id="KW-1185">Reference proteome</keyword>
<feature type="chain" id="PRO_0000429002" description="Outer kinetochore KNL1 complex subunit sos7">
    <location>
        <begin position="1"/>
        <end position="264"/>
    </location>
</feature>
<feature type="coiled-coil region" evidence="1">
    <location>
        <begin position="90"/>
        <end position="236"/>
    </location>
</feature>
<feature type="mutagenesis site" description="In sos7-178; temperature-sensitive; increases the number of chromosome segregation defects above 34 degrees Celsius." evidence="2">
    <original>I</original>
    <variation>N</variation>
    <location>
        <position position="178"/>
    </location>
</feature>